<sequence>MYNPFDEAYHGLCEEILEIGNRRDDRTHTGTISKFGHQLRFDLTKGFPLLTTKKVSFKLVATELLWFIKGDTNIQYLLKYNNNIWNEWAFENYVQSDDYHGPDMTDFGHRSQQDPEFNEQYKEEMKKFKERILNDDAFAKKYGNLGNVYGKQWRDWEDKNGNHYDQLKSVIQQIKTNPNSRRHIVSAWNPTEIDSMALPPCHTMFQFYVQEGKLNCQLYQRSADIFLGVPFNIASYALLTHLVAKECGLEVGEFIHTFGDAHIYSNHMDAIHTQLSRDSYLPPQLKINTDKSIFDINYEDLELINYESHPAIKAPIAV</sequence>
<protein>
    <recommendedName>
        <fullName evidence="1">Thymidylate synthase</fullName>
        <shortName evidence="1">TS</shortName>
        <shortName evidence="1">TSase</shortName>
        <ecNumber evidence="1">2.1.1.45</ecNumber>
    </recommendedName>
</protein>
<name>TYSY_STAAU</name>
<gene>
    <name evidence="1" type="primary">thyA</name>
    <name type="synonym">thyE</name>
    <name type="synonym">thyF</name>
</gene>
<geneLocation type="plasmid">
    <name>pSK1</name>
</geneLocation>
<geneLocation type="plasmid">
    <name>pABU1</name>
</geneLocation>
<comment type="function">
    <text evidence="1">Catalyzes the reductive methylation of 2'-deoxyuridine-5'-monophosphate (dUMP) to 2'-deoxythymidine-5'-monophosphate (dTMP) while utilizing 5,10-methylenetetrahydrofolate (mTHF) as the methyl donor and reductant in the reaction, yielding dihydrofolate (DHF) as a by-product. This enzymatic reaction provides an intracellular de novo source of dTMP, an essential precursor for DNA biosynthesis.</text>
</comment>
<comment type="catalytic activity">
    <reaction evidence="1">
        <text>dUMP + (6R)-5,10-methylene-5,6,7,8-tetrahydrofolate = 7,8-dihydrofolate + dTMP</text>
        <dbReference type="Rhea" id="RHEA:12104"/>
        <dbReference type="ChEBI" id="CHEBI:15636"/>
        <dbReference type="ChEBI" id="CHEBI:57451"/>
        <dbReference type="ChEBI" id="CHEBI:63528"/>
        <dbReference type="ChEBI" id="CHEBI:246422"/>
        <dbReference type="EC" id="2.1.1.45"/>
    </reaction>
</comment>
<comment type="pathway">
    <text evidence="1">Pyrimidine metabolism; dTTP biosynthesis.</text>
</comment>
<comment type="subunit">
    <text evidence="1">Homodimer.</text>
</comment>
<comment type="subcellular location">
    <subcellularLocation>
        <location evidence="1">Cytoplasm</location>
    </subcellularLocation>
</comment>
<comment type="similarity">
    <text evidence="1">Belongs to the thymidylate synthase family. Bacterial-type ThyA subfamily.</text>
</comment>
<keyword id="KW-0963">Cytoplasm</keyword>
<keyword id="KW-0489">Methyltransferase</keyword>
<keyword id="KW-0545">Nucleotide biosynthesis</keyword>
<keyword id="KW-0614">Plasmid</keyword>
<keyword id="KW-0808">Transferase</keyword>
<evidence type="ECO:0000255" key="1">
    <source>
        <dbReference type="HAMAP-Rule" id="MF_00008"/>
    </source>
</evidence>
<reference key="1">
    <citation type="journal article" date="1989" name="Mol. Microbiol.">
        <title>Trimethoprim resistance transposon Tn4003 from Staphylococcus aureus encodes genes for a dihydrofolate reductase and thymidylate synthetase flanked by three copies of IS257.</title>
        <authorList>
            <person name="Rouch D.A."/>
            <person name="Messeroti L.J."/>
            <person name="Loo L.S.L."/>
            <person name="Jackson C.A."/>
            <person name="Skurray R.A."/>
        </authorList>
    </citation>
    <scope>NUCLEOTIDE SEQUENCE [GENOMIC DNA]</scope>
    <source>
        <plasmid>pSK1</plasmid>
        <transposon>Tn4003</transposon>
    </source>
</reference>
<reference key="2">
    <citation type="journal article" date="1990" name="FEBS Lett.">
        <title>Identical genes for trimethoprim-resistant dihydrofolate reductase from Staphylococcus aureus in Australia and central Europe.</title>
        <authorList>
            <person name="Burdeska A."/>
            <person name="Ott M."/>
            <person name="Bannwarth W."/>
            <person name="Then R.L."/>
        </authorList>
    </citation>
    <scope>NUCLEOTIDE SEQUENCE [GENOMIC DNA]</scope>
    <source>
        <strain>157/4696</strain>
        <plasmid>pABU1</plasmid>
    </source>
</reference>
<accession>P0A0M5</accession>
<accession>P13954</accession>
<accession>Q59907</accession>
<organism>
    <name type="scientific">Staphylococcus aureus</name>
    <dbReference type="NCBI Taxonomy" id="1280"/>
    <lineage>
        <taxon>Bacteria</taxon>
        <taxon>Bacillati</taxon>
        <taxon>Bacillota</taxon>
        <taxon>Bacilli</taxon>
        <taxon>Bacillales</taxon>
        <taxon>Staphylococcaceae</taxon>
        <taxon>Staphylococcus</taxon>
    </lineage>
</organism>
<feature type="chain" id="PRO_0000141022" description="Thymidylate synthase">
    <location>
        <begin position="1"/>
        <end position="318"/>
    </location>
</feature>
<feature type="active site" description="Nucleophile" evidence="1">
    <location>
        <position position="201"/>
    </location>
</feature>
<feature type="binding site" description="in other chain" evidence="1">
    <location>
        <position position="26"/>
    </location>
    <ligand>
        <name>dUMP</name>
        <dbReference type="ChEBI" id="CHEBI:246422"/>
        <note>ligand shared between dimeric partners</note>
    </ligand>
</feature>
<feature type="binding site" evidence="1">
    <location>
        <begin position="181"/>
        <end position="182"/>
    </location>
    <ligand>
        <name>dUMP</name>
        <dbReference type="ChEBI" id="CHEBI:246422"/>
        <note>ligand shared between dimeric partners</note>
    </ligand>
</feature>
<feature type="binding site" description="in other chain" evidence="1">
    <location>
        <begin position="221"/>
        <end position="224"/>
    </location>
    <ligand>
        <name>dUMP</name>
        <dbReference type="ChEBI" id="CHEBI:246422"/>
        <note>ligand shared between dimeric partners</note>
    </ligand>
</feature>
<feature type="binding site" evidence="1">
    <location>
        <position position="224"/>
    </location>
    <ligand>
        <name>(6R)-5,10-methylene-5,6,7,8-tetrahydrofolate</name>
        <dbReference type="ChEBI" id="CHEBI:15636"/>
    </ligand>
</feature>
<feature type="binding site" description="in other chain" evidence="1">
    <location>
        <position position="232"/>
    </location>
    <ligand>
        <name>dUMP</name>
        <dbReference type="ChEBI" id="CHEBI:246422"/>
        <note>ligand shared between dimeric partners</note>
    </ligand>
</feature>
<feature type="binding site" description="in other chain" evidence="1">
    <location>
        <begin position="262"/>
        <end position="264"/>
    </location>
    <ligand>
        <name>dUMP</name>
        <dbReference type="ChEBI" id="CHEBI:246422"/>
        <note>ligand shared between dimeric partners</note>
    </ligand>
</feature>
<feature type="binding site" evidence="1">
    <location>
        <position position="317"/>
    </location>
    <ligand>
        <name>(6R)-5,10-methylene-5,6,7,8-tetrahydrofolate</name>
        <dbReference type="ChEBI" id="CHEBI:15636"/>
    </ligand>
</feature>
<dbReference type="EC" id="2.1.1.45" evidence="1"/>
<dbReference type="EMBL" id="X13290">
    <property type="protein sequence ID" value="CAA31648.1"/>
    <property type="molecule type" value="Genomic_DNA"/>
</dbReference>
<dbReference type="EMBL" id="Y07536">
    <property type="protein sequence ID" value="CAA68823.1"/>
    <property type="molecule type" value="Genomic_DNA"/>
</dbReference>
<dbReference type="PIR" id="S04163">
    <property type="entry name" value="YXSAT3"/>
</dbReference>
<dbReference type="RefSeq" id="NP_877984.1">
    <property type="nucleotide sequence ID" value="NC_005054.1"/>
</dbReference>
<dbReference type="RefSeq" id="WP_000282655.1">
    <property type="nucleotide sequence ID" value="NZ_VTZV01000057.1"/>
</dbReference>
<dbReference type="RefSeq" id="YP_002790944.1">
    <property type="nucleotide sequence ID" value="NC_012547.1"/>
</dbReference>
<dbReference type="RefSeq" id="YP_003813114.1">
    <property type="nucleotide sequence ID" value="NC_014369.1"/>
</dbReference>
<dbReference type="RefSeq" id="YP_006937651.1">
    <property type="nucleotide sequence ID" value="NC_013320.1"/>
</dbReference>
<dbReference type="RefSeq" id="YP_006938353.1">
    <property type="nucleotide sequence ID" value="NC_013338.1"/>
</dbReference>
<dbReference type="SMR" id="P0A0M5"/>
<dbReference type="OMA" id="WNEWEVG"/>
<dbReference type="UniPathway" id="UPA00575"/>
<dbReference type="GO" id="GO:0005829">
    <property type="term" value="C:cytosol"/>
    <property type="evidence" value="ECO:0007669"/>
    <property type="project" value="TreeGrafter"/>
</dbReference>
<dbReference type="GO" id="GO:0004799">
    <property type="term" value="F:thymidylate synthase activity"/>
    <property type="evidence" value="ECO:0007669"/>
    <property type="project" value="UniProtKB-UniRule"/>
</dbReference>
<dbReference type="GO" id="GO:0006231">
    <property type="term" value="P:dTMP biosynthetic process"/>
    <property type="evidence" value="ECO:0007669"/>
    <property type="project" value="UniProtKB-UniRule"/>
</dbReference>
<dbReference type="GO" id="GO:0006235">
    <property type="term" value="P:dTTP biosynthetic process"/>
    <property type="evidence" value="ECO:0007669"/>
    <property type="project" value="UniProtKB-UniRule"/>
</dbReference>
<dbReference type="GO" id="GO:0032259">
    <property type="term" value="P:methylation"/>
    <property type="evidence" value="ECO:0007669"/>
    <property type="project" value="UniProtKB-KW"/>
</dbReference>
<dbReference type="CDD" id="cd00351">
    <property type="entry name" value="TS_Pyrimidine_HMase"/>
    <property type="match status" value="1"/>
</dbReference>
<dbReference type="Gene3D" id="3.30.572.10">
    <property type="entry name" value="Thymidylate synthase/dCMP hydroxymethylase domain"/>
    <property type="match status" value="1"/>
</dbReference>
<dbReference type="HAMAP" id="MF_00008">
    <property type="entry name" value="Thymidy_synth_bact"/>
    <property type="match status" value="1"/>
</dbReference>
<dbReference type="InterPro" id="IPR045097">
    <property type="entry name" value="Thymidate_synth/dCMP_Mease"/>
</dbReference>
<dbReference type="InterPro" id="IPR023451">
    <property type="entry name" value="Thymidate_synth/dCMP_Mease_dom"/>
</dbReference>
<dbReference type="InterPro" id="IPR036926">
    <property type="entry name" value="Thymidate_synth/dCMP_Mease_sf"/>
</dbReference>
<dbReference type="InterPro" id="IPR000398">
    <property type="entry name" value="Thymidylate_synthase"/>
</dbReference>
<dbReference type="InterPro" id="IPR020940">
    <property type="entry name" value="Thymidylate_synthase_AS"/>
</dbReference>
<dbReference type="NCBIfam" id="NF002496">
    <property type="entry name" value="PRK01827.1-2"/>
    <property type="match status" value="1"/>
</dbReference>
<dbReference type="NCBIfam" id="TIGR03284">
    <property type="entry name" value="thym_sym"/>
    <property type="match status" value="1"/>
</dbReference>
<dbReference type="PANTHER" id="PTHR11548:SF9">
    <property type="entry name" value="THYMIDYLATE SYNTHASE"/>
    <property type="match status" value="1"/>
</dbReference>
<dbReference type="PANTHER" id="PTHR11548">
    <property type="entry name" value="THYMIDYLATE SYNTHASE 1"/>
    <property type="match status" value="1"/>
</dbReference>
<dbReference type="Pfam" id="PF00303">
    <property type="entry name" value="Thymidylat_synt"/>
    <property type="match status" value="1"/>
</dbReference>
<dbReference type="PRINTS" id="PR00108">
    <property type="entry name" value="THYMDSNTHASE"/>
</dbReference>
<dbReference type="SUPFAM" id="SSF55831">
    <property type="entry name" value="Thymidylate synthase/dCMP hydroxymethylase"/>
    <property type="match status" value="1"/>
</dbReference>
<dbReference type="PROSITE" id="PS00091">
    <property type="entry name" value="THYMIDYLATE_SYNTHASE"/>
    <property type="match status" value="1"/>
</dbReference>
<proteinExistence type="inferred from homology"/>